<evidence type="ECO:0000255" key="1">
    <source>
        <dbReference type="HAMAP-Rule" id="MF_00515"/>
    </source>
</evidence>
<reference key="1">
    <citation type="journal article" date="2002" name="Nucleic Acids Res.">
        <title>Genome sequence of Shigella flexneri 2a: insights into pathogenicity through comparison with genomes of Escherichia coli K12 and O157.</title>
        <authorList>
            <person name="Jin Q."/>
            <person name="Yuan Z."/>
            <person name="Xu J."/>
            <person name="Wang Y."/>
            <person name="Shen Y."/>
            <person name="Lu W."/>
            <person name="Wang J."/>
            <person name="Liu H."/>
            <person name="Yang J."/>
            <person name="Yang F."/>
            <person name="Zhang X."/>
            <person name="Zhang J."/>
            <person name="Yang G."/>
            <person name="Wu H."/>
            <person name="Qu D."/>
            <person name="Dong J."/>
            <person name="Sun L."/>
            <person name="Xue Y."/>
            <person name="Zhao A."/>
            <person name="Gao Y."/>
            <person name="Zhu J."/>
            <person name="Kan B."/>
            <person name="Ding K."/>
            <person name="Chen S."/>
            <person name="Cheng H."/>
            <person name="Yao Z."/>
            <person name="He B."/>
            <person name="Chen R."/>
            <person name="Ma D."/>
            <person name="Qiang B."/>
            <person name="Wen Y."/>
            <person name="Hou Y."/>
            <person name="Yu J."/>
        </authorList>
    </citation>
    <scope>NUCLEOTIDE SEQUENCE [LARGE SCALE GENOMIC DNA]</scope>
    <source>
        <strain>301 / Serotype 2a</strain>
    </source>
</reference>
<reference key="2">
    <citation type="journal article" date="2003" name="Infect. Immun.">
        <title>Complete genome sequence and comparative genomics of Shigella flexneri serotype 2a strain 2457T.</title>
        <authorList>
            <person name="Wei J."/>
            <person name="Goldberg M.B."/>
            <person name="Burland V."/>
            <person name="Venkatesan M.M."/>
            <person name="Deng W."/>
            <person name="Fournier G."/>
            <person name="Mayhew G.F."/>
            <person name="Plunkett G. III"/>
            <person name="Rose D.J."/>
            <person name="Darling A."/>
            <person name="Mau B."/>
            <person name="Perna N.T."/>
            <person name="Payne S.M."/>
            <person name="Runyen-Janecky L.J."/>
            <person name="Zhou S."/>
            <person name="Schwartz D.C."/>
            <person name="Blattner F.R."/>
        </authorList>
    </citation>
    <scope>NUCLEOTIDE SEQUENCE [LARGE SCALE GENOMIC DNA]</scope>
    <source>
        <strain>ATCC 700930 / 2457T / Serotype 2a</strain>
    </source>
</reference>
<protein>
    <recommendedName>
        <fullName evidence="1">N-methyl-L-tryptophan oxidase</fullName>
        <shortName evidence="1">MTOX</shortName>
        <ecNumber evidence="1">1.5.3.-</ecNumber>
    </recommendedName>
</protein>
<sequence length="372" mass="40886">MKYDLIIIGSGSVGAAAGYYATRAGLNVLMTDAHMPPHQHGSHHGDTRLIRHAYGEGEKYVPLVLRAQTLWDELSRHNEDDPIFVRSGVINLGPADSAFLANVAHSAEQWQLNVEKLDAQGIMARWPEIRVPDNYIGLFETDSGFLRSELAIKTWIQLAKEAGCAQLFNCPVTAIRHDDDGVTIETVDGEYQAKKAIVCAGTWVKDLLPELPVQPVRKVFAWYQADGRYSVKNKFPAFTGELPNGDQYYGFPAENDALKIGKHNGGQVIHSADERVPFAEVASDGSEAFPFLRNVLPGIGCCLYGAACTYDNSPDEDFIIDTLPGHDNTLLITGLSGHGFKFASVLGEIAADFAQDQKSDFDLTPFRLSRFQ</sequence>
<accession>Q83RT9</accession>
<keyword id="KW-0274">FAD</keyword>
<keyword id="KW-0285">Flavoprotein</keyword>
<keyword id="KW-0560">Oxidoreductase</keyword>
<keyword id="KW-1185">Reference proteome</keyword>
<feature type="chain" id="PRO_0000213770" description="N-methyl-L-tryptophan oxidase">
    <location>
        <begin position="1"/>
        <end position="372"/>
    </location>
</feature>
<feature type="binding site" evidence="1">
    <location>
        <begin position="4"/>
        <end position="34"/>
    </location>
    <ligand>
        <name>FAD</name>
        <dbReference type="ChEBI" id="CHEBI:57692"/>
    </ligand>
</feature>
<feature type="modified residue" description="S-8alpha-FAD cysteine" evidence="1">
    <location>
        <position position="308"/>
    </location>
</feature>
<gene>
    <name evidence="1" type="primary">solA</name>
    <name type="ordered locus">SF1066</name>
    <name type="ordered locus">S1143</name>
</gene>
<organism>
    <name type="scientific">Shigella flexneri</name>
    <dbReference type="NCBI Taxonomy" id="623"/>
    <lineage>
        <taxon>Bacteria</taxon>
        <taxon>Pseudomonadati</taxon>
        <taxon>Pseudomonadota</taxon>
        <taxon>Gammaproteobacteria</taxon>
        <taxon>Enterobacterales</taxon>
        <taxon>Enterobacteriaceae</taxon>
        <taxon>Shigella</taxon>
    </lineage>
</organism>
<name>MTOX_SHIFL</name>
<comment type="function">
    <text evidence="1">Catalyzes the oxidative demethylation of N-methyl-L-tryptophan.</text>
</comment>
<comment type="catalytic activity">
    <reaction evidence="1">
        <text>N(alpha)-methyl-L-tryptophan + O2 + H2O = L-tryptophan + formaldehyde + H2O2</text>
        <dbReference type="Rhea" id="RHEA:28006"/>
        <dbReference type="ChEBI" id="CHEBI:15377"/>
        <dbReference type="ChEBI" id="CHEBI:15379"/>
        <dbReference type="ChEBI" id="CHEBI:16240"/>
        <dbReference type="ChEBI" id="CHEBI:16842"/>
        <dbReference type="ChEBI" id="CHEBI:57283"/>
        <dbReference type="ChEBI" id="CHEBI:57912"/>
    </reaction>
</comment>
<comment type="cofactor">
    <cofactor evidence="1">
        <name>FAD</name>
        <dbReference type="ChEBI" id="CHEBI:57692"/>
    </cofactor>
    <text evidence="1">Binds 1 FAD per subunit.</text>
</comment>
<comment type="subunit">
    <text evidence="1">Monomer.</text>
</comment>
<comment type="similarity">
    <text evidence="1">Belongs to the MSOX/MTOX family. MTOX subfamily.</text>
</comment>
<proteinExistence type="inferred from homology"/>
<dbReference type="EC" id="1.5.3.-" evidence="1"/>
<dbReference type="EMBL" id="AE005674">
    <property type="protein sequence ID" value="AAN42688.1"/>
    <property type="molecule type" value="Genomic_DNA"/>
</dbReference>
<dbReference type="EMBL" id="AE014073">
    <property type="protein sequence ID" value="AAP16574.1"/>
    <property type="molecule type" value="Genomic_DNA"/>
</dbReference>
<dbReference type="RefSeq" id="NP_706981.1">
    <property type="nucleotide sequence ID" value="NC_004337.2"/>
</dbReference>
<dbReference type="RefSeq" id="WP_000872813.1">
    <property type="nucleotide sequence ID" value="NZ_WPGW01000001.1"/>
</dbReference>
<dbReference type="SMR" id="Q83RT9"/>
<dbReference type="STRING" id="198214.SF1066"/>
<dbReference type="PaxDb" id="198214-SF1066"/>
<dbReference type="GeneID" id="1024010"/>
<dbReference type="KEGG" id="sfl:SF1066"/>
<dbReference type="KEGG" id="sfx:S1143"/>
<dbReference type="PATRIC" id="fig|198214.7.peg.1248"/>
<dbReference type="HOGENOM" id="CLU_007884_2_1_6"/>
<dbReference type="Proteomes" id="UP000001006">
    <property type="component" value="Chromosome"/>
</dbReference>
<dbReference type="Proteomes" id="UP000002673">
    <property type="component" value="Chromosome"/>
</dbReference>
<dbReference type="GO" id="GO:0005829">
    <property type="term" value="C:cytosol"/>
    <property type="evidence" value="ECO:0007669"/>
    <property type="project" value="TreeGrafter"/>
</dbReference>
<dbReference type="GO" id="GO:0050660">
    <property type="term" value="F:flavin adenine dinucleotide binding"/>
    <property type="evidence" value="ECO:0007669"/>
    <property type="project" value="InterPro"/>
</dbReference>
<dbReference type="GO" id="GO:0050131">
    <property type="term" value="F:N-methyl-L-amino-acid oxidase activity"/>
    <property type="evidence" value="ECO:0007669"/>
    <property type="project" value="InterPro"/>
</dbReference>
<dbReference type="GO" id="GO:0008115">
    <property type="term" value="F:sarcosine oxidase activity"/>
    <property type="evidence" value="ECO:0007669"/>
    <property type="project" value="TreeGrafter"/>
</dbReference>
<dbReference type="Gene3D" id="3.30.9.10">
    <property type="entry name" value="D-Amino Acid Oxidase, subunit A, domain 2"/>
    <property type="match status" value="1"/>
</dbReference>
<dbReference type="Gene3D" id="3.50.50.60">
    <property type="entry name" value="FAD/NAD(P)-binding domain"/>
    <property type="match status" value="1"/>
</dbReference>
<dbReference type="HAMAP" id="MF_00515">
    <property type="entry name" value="MTOX"/>
    <property type="match status" value="1"/>
</dbReference>
<dbReference type="InterPro" id="IPR006076">
    <property type="entry name" value="FAD-dep_OxRdtase"/>
</dbReference>
<dbReference type="InterPro" id="IPR036188">
    <property type="entry name" value="FAD/NAD-bd_sf"/>
</dbReference>
<dbReference type="InterPro" id="IPR023493">
    <property type="entry name" value="Me_Trp_Oxase_MTOX"/>
</dbReference>
<dbReference type="InterPro" id="IPR045170">
    <property type="entry name" value="MTOX"/>
</dbReference>
<dbReference type="NCBIfam" id="NF008425">
    <property type="entry name" value="PRK11259.1"/>
    <property type="match status" value="1"/>
</dbReference>
<dbReference type="PANTHER" id="PTHR10961:SF7">
    <property type="entry name" value="FAD DEPENDENT OXIDOREDUCTASE DOMAIN-CONTAINING PROTEIN"/>
    <property type="match status" value="1"/>
</dbReference>
<dbReference type="PANTHER" id="PTHR10961">
    <property type="entry name" value="PEROXISOMAL SARCOSINE OXIDASE"/>
    <property type="match status" value="1"/>
</dbReference>
<dbReference type="Pfam" id="PF01266">
    <property type="entry name" value="DAO"/>
    <property type="match status" value="1"/>
</dbReference>
<dbReference type="SUPFAM" id="SSF54373">
    <property type="entry name" value="FAD-linked reductases, C-terminal domain"/>
    <property type="match status" value="1"/>
</dbReference>
<dbReference type="SUPFAM" id="SSF51905">
    <property type="entry name" value="FAD/NAD(P)-binding domain"/>
    <property type="match status" value="1"/>
</dbReference>